<feature type="chain" id="PRO_0000362261" description="ATP synthase subunit a">
    <location>
        <begin position="1"/>
        <end position="225"/>
    </location>
</feature>
<feature type="transmembrane region" description="Helical" evidence="1">
    <location>
        <begin position="16"/>
        <end position="36"/>
    </location>
</feature>
<feature type="transmembrane region" description="Helical" evidence="1">
    <location>
        <begin position="79"/>
        <end position="99"/>
    </location>
</feature>
<feature type="transmembrane region" description="Helical" evidence="1">
    <location>
        <begin position="105"/>
        <end position="125"/>
    </location>
</feature>
<feature type="transmembrane region" description="Helical" evidence="1">
    <location>
        <begin position="176"/>
        <end position="196"/>
    </location>
</feature>
<feature type="transmembrane region" description="Helical" evidence="1">
    <location>
        <begin position="202"/>
        <end position="222"/>
    </location>
</feature>
<organism>
    <name type="scientific">Campylobacter curvus (strain 525.92)</name>
    <dbReference type="NCBI Taxonomy" id="360105"/>
    <lineage>
        <taxon>Bacteria</taxon>
        <taxon>Pseudomonadati</taxon>
        <taxon>Campylobacterota</taxon>
        <taxon>Epsilonproteobacteria</taxon>
        <taxon>Campylobacterales</taxon>
        <taxon>Campylobacteraceae</taxon>
        <taxon>Campylobacter</taxon>
    </lineage>
</organism>
<protein>
    <recommendedName>
        <fullName evidence="1">ATP synthase subunit a</fullName>
    </recommendedName>
    <alternativeName>
        <fullName evidence="1">ATP synthase F0 sector subunit a</fullName>
    </alternativeName>
    <alternativeName>
        <fullName evidence="1">F-ATPase subunit 6</fullName>
    </alternativeName>
</protein>
<gene>
    <name evidence="1" type="primary">atpB</name>
    <name type="ordered locus">Ccur92_10600</name>
    <name type="ORF">CCV52592_0790</name>
</gene>
<name>ATP6_CAMC5</name>
<sequence length="225" mass="25193">MKDLFLFSDLIYHNHLFVYAFHFCLVAIIVVLVAKLATSKMQLVPRGLQNIVEAYLEGVISMGRDTLGSEALARKYLPLVATIGFVVFFSNAIGIIPGFESPTSSLNLTLTLALIVFFYYHFEGIKKNGFFKYFGHFMGPSKALAPLMFPVEIISHLSRIVSLSFRLFGNIKGDDLFLLVMLTLAPWFAPLPAYALLTLMAVLQTFIFMMLTYVYLAGAVAIEEH</sequence>
<proteinExistence type="inferred from homology"/>
<evidence type="ECO:0000255" key="1">
    <source>
        <dbReference type="HAMAP-Rule" id="MF_01393"/>
    </source>
</evidence>
<dbReference type="EMBL" id="CP000767">
    <property type="protein sequence ID" value="EAT99954.1"/>
    <property type="molecule type" value="Genomic_DNA"/>
</dbReference>
<dbReference type="RefSeq" id="WP_009651173.1">
    <property type="nucleotide sequence ID" value="NC_009715.2"/>
</dbReference>
<dbReference type="SMR" id="A7GYS2"/>
<dbReference type="STRING" id="360105.CCV52592_0790"/>
<dbReference type="KEGG" id="ccv:CCV52592_0790"/>
<dbReference type="HOGENOM" id="CLU_041018_2_2_7"/>
<dbReference type="OrthoDB" id="9789241at2"/>
<dbReference type="Proteomes" id="UP000006380">
    <property type="component" value="Chromosome"/>
</dbReference>
<dbReference type="GO" id="GO:0005886">
    <property type="term" value="C:plasma membrane"/>
    <property type="evidence" value="ECO:0007669"/>
    <property type="project" value="UniProtKB-SubCell"/>
</dbReference>
<dbReference type="GO" id="GO:0045259">
    <property type="term" value="C:proton-transporting ATP synthase complex"/>
    <property type="evidence" value="ECO:0007669"/>
    <property type="project" value="UniProtKB-KW"/>
</dbReference>
<dbReference type="GO" id="GO:0046933">
    <property type="term" value="F:proton-transporting ATP synthase activity, rotational mechanism"/>
    <property type="evidence" value="ECO:0007669"/>
    <property type="project" value="UniProtKB-UniRule"/>
</dbReference>
<dbReference type="GO" id="GO:0042777">
    <property type="term" value="P:proton motive force-driven plasma membrane ATP synthesis"/>
    <property type="evidence" value="ECO:0007669"/>
    <property type="project" value="TreeGrafter"/>
</dbReference>
<dbReference type="CDD" id="cd00310">
    <property type="entry name" value="ATP-synt_Fo_a_6"/>
    <property type="match status" value="1"/>
</dbReference>
<dbReference type="FunFam" id="1.20.120.220:FF:000006">
    <property type="entry name" value="ATP synthase subunit a"/>
    <property type="match status" value="1"/>
</dbReference>
<dbReference type="Gene3D" id="1.20.120.220">
    <property type="entry name" value="ATP synthase, F0 complex, subunit A"/>
    <property type="match status" value="1"/>
</dbReference>
<dbReference type="HAMAP" id="MF_01393">
    <property type="entry name" value="ATP_synth_a_bact"/>
    <property type="match status" value="1"/>
</dbReference>
<dbReference type="InterPro" id="IPR045082">
    <property type="entry name" value="ATP_syn_F0_a_bact/chloroplast"/>
</dbReference>
<dbReference type="InterPro" id="IPR000568">
    <property type="entry name" value="ATP_synth_F0_asu"/>
</dbReference>
<dbReference type="InterPro" id="IPR023011">
    <property type="entry name" value="ATP_synth_F0_asu_AS"/>
</dbReference>
<dbReference type="InterPro" id="IPR035908">
    <property type="entry name" value="F0_ATP_A_sf"/>
</dbReference>
<dbReference type="NCBIfam" id="TIGR01131">
    <property type="entry name" value="ATP_synt_6_or_A"/>
    <property type="match status" value="1"/>
</dbReference>
<dbReference type="NCBIfam" id="NF004481">
    <property type="entry name" value="PRK05815.2-3"/>
    <property type="match status" value="1"/>
</dbReference>
<dbReference type="PANTHER" id="PTHR42823">
    <property type="entry name" value="ATP SYNTHASE SUBUNIT A, CHLOROPLASTIC"/>
    <property type="match status" value="1"/>
</dbReference>
<dbReference type="PANTHER" id="PTHR42823:SF3">
    <property type="entry name" value="ATP SYNTHASE SUBUNIT A, CHLOROPLASTIC"/>
    <property type="match status" value="1"/>
</dbReference>
<dbReference type="Pfam" id="PF00119">
    <property type="entry name" value="ATP-synt_A"/>
    <property type="match status" value="1"/>
</dbReference>
<dbReference type="PRINTS" id="PR00123">
    <property type="entry name" value="ATPASEA"/>
</dbReference>
<dbReference type="SUPFAM" id="SSF81336">
    <property type="entry name" value="F1F0 ATP synthase subunit A"/>
    <property type="match status" value="1"/>
</dbReference>
<dbReference type="PROSITE" id="PS00449">
    <property type="entry name" value="ATPASE_A"/>
    <property type="match status" value="1"/>
</dbReference>
<comment type="function">
    <text evidence="1">Key component of the proton channel; it plays a direct role in the translocation of protons across the membrane.</text>
</comment>
<comment type="subunit">
    <text evidence="1">F-type ATPases have 2 components, CF(1) - the catalytic core - and CF(0) - the membrane proton channel. CF(1) has five subunits: alpha(3), beta(3), gamma(1), delta(1), epsilon(1). CF(0) has three main subunits: a(1), b(2) and c(9-12). The alpha and beta chains form an alternating ring which encloses part of the gamma chain. CF(1) is attached to CF(0) by a central stalk formed by the gamma and epsilon chains, while a peripheral stalk is formed by the delta and b chains.</text>
</comment>
<comment type="subcellular location">
    <subcellularLocation>
        <location evidence="1">Cell inner membrane</location>
        <topology evidence="1">Multi-pass membrane protein</topology>
    </subcellularLocation>
</comment>
<comment type="similarity">
    <text evidence="1">Belongs to the ATPase A chain family.</text>
</comment>
<accession>A7GYS2</accession>
<keyword id="KW-0066">ATP synthesis</keyword>
<keyword id="KW-0997">Cell inner membrane</keyword>
<keyword id="KW-1003">Cell membrane</keyword>
<keyword id="KW-0138">CF(0)</keyword>
<keyword id="KW-0375">Hydrogen ion transport</keyword>
<keyword id="KW-0406">Ion transport</keyword>
<keyword id="KW-0472">Membrane</keyword>
<keyword id="KW-1185">Reference proteome</keyword>
<keyword id="KW-0812">Transmembrane</keyword>
<keyword id="KW-1133">Transmembrane helix</keyword>
<keyword id="KW-0813">Transport</keyword>
<reference key="1">
    <citation type="submission" date="2007-07" db="EMBL/GenBank/DDBJ databases">
        <title>Genome sequence of Campylobacter curvus 525.92 isolated from human feces.</title>
        <authorList>
            <person name="Fouts D.E."/>
            <person name="Mongodin E.F."/>
            <person name="Puiu D."/>
            <person name="Sebastian Y."/>
            <person name="Miller W.G."/>
            <person name="Mandrell R.E."/>
            <person name="Lastovica A.J."/>
            <person name="Nelson K.E."/>
        </authorList>
    </citation>
    <scope>NUCLEOTIDE SEQUENCE [LARGE SCALE GENOMIC DNA]</scope>
    <source>
        <strain>525.92</strain>
    </source>
</reference>